<feature type="chain" id="PRO_0000149788" description="Uncharacterized HTH-type transcriptional regulator AF_2414">
    <location>
        <begin position="1"/>
        <end position="229"/>
    </location>
</feature>
<feature type="domain" description="HTH cro/C1-type" evidence="1">
    <location>
        <begin position="24"/>
        <end position="78"/>
    </location>
</feature>
<feature type="DNA-binding region" description="H-T-H motif" evidence="1">
    <location>
        <begin position="35"/>
        <end position="54"/>
    </location>
</feature>
<organism>
    <name type="scientific">Archaeoglobus fulgidus (strain ATCC 49558 / DSM 4304 / JCM 9628 / NBRC 100126 / VC-16)</name>
    <dbReference type="NCBI Taxonomy" id="224325"/>
    <lineage>
        <taxon>Archaea</taxon>
        <taxon>Methanobacteriati</taxon>
        <taxon>Methanobacteriota</taxon>
        <taxon>Archaeoglobi</taxon>
        <taxon>Archaeoglobales</taxon>
        <taxon>Archaeoglobaceae</taxon>
        <taxon>Archaeoglobus</taxon>
    </lineage>
</organism>
<accession>O30257</accession>
<protein>
    <recommendedName>
        <fullName>Uncharacterized HTH-type transcriptional regulator AF_2414</fullName>
    </recommendedName>
</protein>
<reference key="1">
    <citation type="journal article" date="1997" name="Nature">
        <title>The complete genome sequence of the hyperthermophilic, sulphate-reducing archaeon Archaeoglobus fulgidus.</title>
        <authorList>
            <person name="Klenk H.-P."/>
            <person name="Clayton R.A."/>
            <person name="Tomb J.-F."/>
            <person name="White O."/>
            <person name="Nelson K.E."/>
            <person name="Ketchum K.A."/>
            <person name="Dodson R.J."/>
            <person name="Gwinn M.L."/>
            <person name="Hickey E.K."/>
            <person name="Peterson J.D."/>
            <person name="Richardson D.L."/>
            <person name="Kerlavage A.R."/>
            <person name="Graham D.E."/>
            <person name="Kyrpides N.C."/>
            <person name="Fleischmann R.D."/>
            <person name="Quackenbush J."/>
            <person name="Lee N.H."/>
            <person name="Sutton G.G."/>
            <person name="Gill S.R."/>
            <person name="Kirkness E.F."/>
            <person name="Dougherty B.A."/>
            <person name="McKenney K."/>
            <person name="Adams M.D."/>
            <person name="Loftus B.J."/>
            <person name="Peterson S.N."/>
            <person name="Reich C.I."/>
            <person name="McNeil L.K."/>
            <person name="Badger J.H."/>
            <person name="Glodek A."/>
            <person name="Zhou L."/>
            <person name="Overbeek R."/>
            <person name="Gocayne J.D."/>
            <person name="Weidman J.F."/>
            <person name="McDonald L.A."/>
            <person name="Utterback T.R."/>
            <person name="Cotton M.D."/>
            <person name="Spriggs T."/>
            <person name="Artiach P."/>
            <person name="Kaine B.P."/>
            <person name="Sykes S.M."/>
            <person name="Sadow P.W."/>
            <person name="D'Andrea K.P."/>
            <person name="Bowman C."/>
            <person name="Fujii C."/>
            <person name="Garland S.A."/>
            <person name="Mason T.M."/>
            <person name="Olsen G.J."/>
            <person name="Fraser C.M."/>
            <person name="Smith H.O."/>
            <person name="Woese C.R."/>
            <person name="Venter J.C."/>
        </authorList>
    </citation>
    <scope>NUCLEOTIDE SEQUENCE [LARGE SCALE GENOMIC DNA]</scope>
    <source>
        <strain>ATCC 49558 / DSM 4304 / JCM 9628 / NBRC 100126 / VC-16</strain>
    </source>
</reference>
<gene>
    <name type="ordered locus">AF_2414</name>
</gene>
<sequence length="229" mass="25800">MEFRSVAERICGDIVLSENSGEALRKWRSIFNASQSDLARKLGISPSVISDYESGRRKPGTAFLKKFVCALIELDGERGYQVLSKYRYFLESDHKAVLDIAEYQKTAEPSEFCEVIEGKMLTHFDKAIHGHTVIDSINAILSLNAFDFYRLYGLTSERALIFTRVSTGRSPMVAVRVSNLKPSAVVLHGLEAERVDEMAKKIAEIERIPLVVTEIAIGEIVKRLRRKFA</sequence>
<evidence type="ECO:0000255" key="1">
    <source>
        <dbReference type="PROSITE-ProRule" id="PRU00257"/>
    </source>
</evidence>
<dbReference type="EMBL" id="AE000782">
    <property type="protein sequence ID" value="AAB91252.1"/>
    <property type="molecule type" value="Genomic_DNA"/>
</dbReference>
<dbReference type="PIR" id="G69551">
    <property type="entry name" value="G69551"/>
</dbReference>
<dbReference type="RefSeq" id="WP_010879901.1">
    <property type="nucleotide sequence ID" value="NC_000917.1"/>
</dbReference>
<dbReference type="SMR" id="O30257"/>
<dbReference type="STRING" id="224325.AF_2414"/>
<dbReference type="PaxDb" id="224325-AF_2414"/>
<dbReference type="EnsemblBacteria" id="AAB91252">
    <property type="protein sequence ID" value="AAB91252"/>
    <property type="gene ID" value="AF_2414"/>
</dbReference>
<dbReference type="KEGG" id="afu:AF_2414"/>
<dbReference type="eggNOG" id="arCOG04060">
    <property type="taxonomic scope" value="Archaea"/>
</dbReference>
<dbReference type="HOGENOM" id="CLU_077869_0_0_2"/>
<dbReference type="OrthoDB" id="371772at2157"/>
<dbReference type="PhylomeDB" id="O30257"/>
<dbReference type="Proteomes" id="UP000002199">
    <property type="component" value="Chromosome"/>
</dbReference>
<dbReference type="GO" id="GO:0003677">
    <property type="term" value="F:DNA binding"/>
    <property type="evidence" value="ECO:0007669"/>
    <property type="project" value="UniProtKB-KW"/>
</dbReference>
<dbReference type="CDD" id="cd00093">
    <property type="entry name" value="HTH_XRE"/>
    <property type="match status" value="1"/>
</dbReference>
<dbReference type="Gene3D" id="1.10.260.40">
    <property type="entry name" value="lambda repressor-like DNA-binding domains"/>
    <property type="match status" value="1"/>
</dbReference>
<dbReference type="InterPro" id="IPR001387">
    <property type="entry name" value="Cro/C1-type_HTH"/>
</dbReference>
<dbReference type="InterPro" id="IPR010982">
    <property type="entry name" value="Lambda_DNA-bd_dom_sf"/>
</dbReference>
<dbReference type="InterPro" id="IPR017271">
    <property type="entry name" value="Tscrpt_reg_HTH_MJ1545_prd"/>
</dbReference>
<dbReference type="Pfam" id="PF01381">
    <property type="entry name" value="HTH_3"/>
    <property type="match status" value="1"/>
</dbReference>
<dbReference type="PIRSF" id="PIRSF037724">
    <property type="entry name" value="TF_HTH_MJ1545_prd"/>
    <property type="match status" value="1"/>
</dbReference>
<dbReference type="SMART" id="SM00530">
    <property type="entry name" value="HTH_XRE"/>
    <property type="match status" value="1"/>
</dbReference>
<dbReference type="SUPFAM" id="SSF47413">
    <property type="entry name" value="lambda repressor-like DNA-binding domains"/>
    <property type="match status" value="1"/>
</dbReference>
<dbReference type="PROSITE" id="PS50943">
    <property type="entry name" value="HTH_CROC1"/>
    <property type="match status" value="1"/>
</dbReference>
<name>Y2414_ARCFU</name>
<keyword id="KW-0238">DNA-binding</keyword>
<keyword id="KW-1185">Reference proteome</keyword>
<keyword id="KW-0804">Transcription</keyword>
<keyword id="KW-0805">Transcription regulation</keyword>
<proteinExistence type="predicted"/>